<organismHost>
    <name type="scientific">Escherichia coli</name>
    <dbReference type="NCBI Taxonomy" id="562"/>
</organismHost>
<keyword id="KW-0244">Early protein</keyword>
<keyword id="KW-0945">Host-virus interaction</keyword>
<keyword id="KW-1185">Reference proteome</keyword>
<accession>P03776</accession>
<comment type="function">
    <text evidence="1">Plays a role in the inhibition of host cell division. Interacts with and inhibits the major host cytoskeletal protein in bacterial division FtsZ to confer growth advantage to the phage.</text>
</comment>
<comment type="subunit">
    <text evidence="1">Interacts with host FtsZ.</text>
</comment>
<evidence type="ECO:0000269" key="1">
    <source>
    </source>
</evidence>
<name>GP04_BPT7</name>
<feature type="chain" id="PRO_0000106463" description="Gene 0.4 protein">
    <location>
        <begin position="1"/>
        <end position="51"/>
    </location>
</feature>
<dbReference type="EMBL" id="V01146">
    <property type="protein sequence ID" value="CAA24385.1"/>
    <property type="molecule type" value="Genomic_DNA"/>
</dbReference>
<dbReference type="EMBL" id="V01127">
    <property type="protein sequence ID" value="CAA24328.1"/>
    <property type="molecule type" value="Genomic_DNA"/>
</dbReference>
<dbReference type="PIR" id="B43002">
    <property type="entry name" value="W0BP47"/>
</dbReference>
<dbReference type="RefSeq" id="NP_041955.1">
    <property type="nucleotide sequence ID" value="NC_001604.1"/>
</dbReference>
<dbReference type="SMR" id="P03776"/>
<dbReference type="GeneID" id="1261053"/>
<dbReference type="KEGG" id="vg:1261053"/>
<dbReference type="OrthoDB" id="26551at10239"/>
<dbReference type="Proteomes" id="UP000000840">
    <property type="component" value="Genome"/>
</dbReference>
<dbReference type="GO" id="GO:0044865">
    <property type="term" value="P:symbiont-mediated suppression of host cell division"/>
    <property type="evidence" value="ECO:0000314"/>
    <property type="project" value="CACAO"/>
</dbReference>
<sequence length="51" mass="5753">MSTTNVQYGLTAQTVLFYSDMVRCGFNWSLAMAQLKELYENNKAIALESAE</sequence>
<proteinExistence type="evidence at protein level"/>
<protein>
    <recommendedName>
        <fullName>Gene 0.4 protein</fullName>
    </recommendedName>
    <alternativeName>
        <fullName>Gene product 0.4</fullName>
        <shortName>Gp0.4</shortName>
    </alternativeName>
</protein>
<reference key="1">
    <citation type="journal article" date="1983" name="J. Mol. Biol.">
        <title>Complete nucleotide sequence of bacteriophage T7 DNA and the locations of T7 genetic elements.</title>
        <authorList>
            <person name="Dunn J.J."/>
            <person name="Studier F.W."/>
        </authorList>
    </citation>
    <scope>NUCLEOTIDE SEQUENCE [LARGE SCALE GENOMIC DNA]</scope>
</reference>
<reference key="2">
    <citation type="journal article" date="1981" name="J. Mol. Biol.">
        <title>Nucleotide sequence from the genetic left end of bacteriophage T7 DNA to the beginning of gene 4.</title>
        <authorList>
            <person name="Dunn J.J."/>
            <person name="Studier F.W."/>
        </authorList>
    </citation>
    <scope>NUCLEOTIDE SEQUENCE [GENOMIC DNA]</scope>
</reference>
<reference key="3">
    <citation type="journal article" date="1980" name="Bioorg. Khim.">
        <title>Nucleotide sequence of gene 0.4 of bacteriophage T7.</title>
        <authorList>
            <person name="Korobko V.G."/>
            <person name="Chuvpilo S.A."/>
            <person name="Kolosov M.N."/>
        </authorList>
    </citation>
    <scope>NUCLEOTIDE SEQUENCE [GENOMIC DNA]</scope>
</reference>
<reference key="4">
    <citation type="journal article" date="1981" name="J. Biol. Chem.">
        <title>Amino acid sequence of the gene 0.3 protein of bacteriophage T7 and nucleotide sequence of its mRNA.</title>
        <authorList>
            <person name="Dunn J.J."/>
            <person name="Elzinga M."/>
            <person name="Mark K.-K."/>
            <person name="Studier F.W."/>
        </authorList>
    </citation>
    <scope>NUCLEOTIDE SEQUENCE [GENOMIC DNA]</scope>
</reference>
<reference key="5">
    <citation type="journal article" date="2013" name="Proc. Natl. Acad. Sci. U.S.A.">
        <title>Gene product 0.4 increases bacteriophage T7 competitiveness by inhibiting host cell division.</title>
        <authorList>
            <person name="Kiro R."/>
            <person name="Molshanski-Mor S."/>
            <person name="Yosef I."/>
            <person name="Milam S.L."/>
            <person name="Erickson H.P."/>
            <person name="Qimron U."/>
        </authorList>
    </citation>
    <scope>FUNCTION</scope>
    <scope>INTERACTION WITH HOST FTSZ</scope>
</reference>
<organism>
    <name type="scientific">Escherichia phage T7</name>
    <name type="common">Bacteriophage T7</name>
    <dbReference type="NCBI Taxonomy" id="10760"/>
    <lineage>
        <taxon>Viruses</taxon>
        <taxon>Duplodnaviria</taxon>
        <taxon>Heunggongvirae</taxon>
        <taxon>Uroviricota</taxon>
        <taxon>Caudoviricetes</taxon>
        <taxon>Autographiviridae</taxon>
        <taxon>Studiervirinae</taxon>
        <taxon>Teseptimavirus</taxon>
        <taxon>Teseptimavirus T7</taxon>
    </lineage>
</organism>